<evidence type="ECO:0000255" key="1">
    <source>
        <dbReference type="HAMAP-Rule" id="MF_00531"/>
    </source>
</evidence>
<evidence type="ECO:0000305" key="2"/>
<reference key="1">
    <citation type="journal article" date="2005" name="Science">
        <title>Genome streamlining in a cosmopolitan oceanic bacterium.</title>
        <authorList>
            <person name="Giovannoni S.J."/>
            <person name="Tripp H.J."/>
            <person name="Givan S."/>
            <person name="Podar M."/>
            <person name="Vergin K.L."/>
            <person name="Baptista D."/>
            <person name="Bibbs L."/>
            <person name="Eads J."/>
            <person name="Richardson T.H."/>
            <person name="Noordewier M."/>
            <person name="Rappe M.S."/>
            <person name="Short J.M."/>
            <person name="Carrington J.C."/>
            <person name="Mathur E.J."/>
        </authorList>
    </citation>
    <scope>NUCLEOTIDE SEQUENCE [LARGE SCALE GENOMIC DNA]</scope>
    <source>
        <strain>HTCC1062</strain>
    </source>
</reference>
<dbReference type="EMBL" id="CP000084">
    <property type="protein sequence ID" value="AAZ21916.1"/>
    <property type="molecule type" value="Genomic_DNA"/>
</dbReference>
<dbReference type="RefSeq" id="WP_006996815.1">
    <property type="nucleotide sequence ID" value="NC_007205.1"/>
</dbReference>
<dbReference type="SMR" id="Q4FLM2"/>
<dbReference type="STRING" id="335992.SAR11_1113"/>
<dbReference type="GeneID" id="66295602"/>
<dbReference type="KEGG" id="pub:SAR11_1113"/>
<dbReference type="eggNOG" id="COG0185">
    <property type="taxonomic scope" value="Bacteria"/>
</dbReference>
<dbReference type="HOGENOM" id="CLU_144911_0_1_5"/>
<dbReference type="OrthoDB" id="9797833at2"/>
<dbReference type="Proteomes" id="UP000002528">
    <property type="component" value="Chromosome"/>
</dbReference>
<dbReference type="GO" id="GO:0005737">
    <property type="term" value="C:cytoplasm"/>
    <property type="evidence" value="ECO:0007669"/>
    <property type="project" value="UniProtKB-ARBA"/>
</dbReference>
<dbReference type="GO" id="GO:0015935">
    <property type="term" value="C:small ribosomal subunit"/>
    <property type="evidence" value="ECO:0007669"/>
    <property type="project" value="InterPro"/>
</dbReference>
<dbReference type="GO" id="GO:0019843">
    <property type="term" value="F:rRNA binding"/>
    <property type="evidence" value="ECO:0007669"/>
    <property type="project" value="UniProtKB-UniRule"/>
</dbReference>
<dbReference type="GO" id="GO:0003735">
    <property type="term" value="F:structural constituent of ribosome"/>
    <property type="evidence" value="ECO:0007669"/>
    <property type="project" value="InterPro"/>
</dbReference>
<dbReference type="GO" id="GO:0000028">
    <property type="term" value="P:ribosomal small subunit assembly"/>
    <property type="evidence" value="ECO:0007669"/>
    <property type="project" value="TreeGrafter"/>
</dbReference>
<dbReference type="GO" id="GO:0006412">
    <property type="term" value="P:translation"/>
    <property type="evidence" value="ECO:0007669"/>
    <property type="project" value="UniProtKB-UniRule"/>
</dbReference>
<dbReference type="FunFam" id="3.30.860.10:FF:000001">
    <property type="entry name" value="30S ribosomal protein S19"/>
    <property type="match status" value="1"/>
</dbReference>
<dbReference type="Gene3D" id="3.30.860.10">
    <property type="entry name" value="30s Ribosomal Protein S19, Chain A"/>
    <property type="match status" value="1"/>
</dbReference>
<dbReference type="HAMAP" id="MF_00531">
    <property type="entry name" value="Ribosomal_uS19"/>
    <property type="match status" value="1"/>
</dbReference>
<dbReference type="InterPro" id="IPR002222">
    <property type="entry name" value="Ribosomal_uS19"/>
</dbReference>
<dbReference type="InterPro" id="IPR005732">
    <property type="entry name" value="Ribosomal_uS19_bac-type"/>
</dbReference>
<dbReference type="InterPro" id="IPR020934">
    <property type="entry name" value="Ribosomal_uS19_CS"/>
</dbReference>
<dbReference type="InterPro" id="IPR023575">
    <property type="entry name" value="Ribosomal_uS19_SF"/>
</dbReference>
<dbReference type="NCBIfam" id="TIGR01050">
    <property type="entry name" value="rpsS_bact"/>
    <property type="match status" value="1"/>
</dbReference>
<dbReference type="PANTHER" id="PTHR11880">
    <property type="entry name" value="RIBOSOMAL PROTEIN S19P FAMILY MEMBER"/>
    <property type="match status" value="1"/>
</dbReference>
<dbReference type="PANTHER" id="PTHR11880:SF8">
    <property type="entry name" value="SMALL RIBOSOMAL SUBUNIT PROTEIN US19M"/>
    <property type="match status" value="1"/>
</dbReference>
<dbReference type="Pfam" id="PF00203">
    <property type="entry name" value="Ribosomal_S19"/>
    <property type="match status" value="1"/>
</dbReference>
<dbReference type="PIRSF" id="PIRSF002144">
    <property type="entry name" value="Ribosomal_S19"/>
    <property type="match status" value="1"/>
</dbReference>
<dbReference type="PRINTS" id="PR00975">
    <property type="entry name" value="RIBOSOMALS19"/>
</dbReference>
<dbReference type="SUPFAM" id="SSF54570">
    <property type="entry name" value="Ribosomal protein S19"/>
    <property type="match status" value="1"/>
</dbReference>
<dbReference type="PROSITE" id="PS00323">
    <property type="entry name" value="RIBOSOMAL_S19"/>
    <property type="match status" value="1"/>
</dbReference>
<accession>Q4FLM2</accession>
<organism>
    <name type="scientific">Pelagibacter ubique (strain HTCC1062)</name>
    <dbReference type="NCBI Taxonomy" id="335992"/>
    <lineage>
        <taxon>Bacteria</taxon>
        <taxon>Pseudomonadati</taxon>
        <taxon>Pseudomonadota</taxon>
        <taxon>Alphaproteobacteria</taxon>
        <taxon>Candidatus Pelagibacterales</taxon>
        <taxon>Candidatus Pelagibacteraceae</taxon>
        <taxon>Candidatus Pelagibacter</taxon>
    </lineage>
</organism>
<sequence>MARSVWKGPFVEESLIKKVEKQKLDPKKMPIKTWSRKSTIIPEFIGVSFLIYNGKKFIPVTISEDMVGHKLGEFSPTRTFFGHTPAEKKGKPAEKKK</sequence>
<feature type="chain" id="PRO_0000265394" description="Small ribosomal subunit protein uS19">
    <location>
        <begin position="1"/>
        <end position="97"/>
    </location>
</feature>
<protein>
    <recommendedName>
        <fullName evidence="1">Small ribosomal subunit protein uS19</fullName>
    </recommendedName>
    <alternativeName>
        <fullName evidence="2">30S ribosomal protein S19</fullName>
    </alternativeName>
</protein>
<name>RS19_PELUB</name>
<keyword id="KW-1185">Reference proteome</keyword>
<keyword id="KW-0687">Ribonucleoprotein</keyword>
<keyword id="KW-0689">Ribosomal protein</keyword>
<keyword id="KW-0694">RNA-binding</keyword>
<keyword id="KW-0699">rRNA-binding</keyword>
<comment type="function">
    <text evidence="1">Protein S19 forms a complex with S13 that binds strongly to the 16S ribosomal RNA.</text>
</comment>
<comment type="similarity">
    <text evidence="1">Belongs to the universal ribosomal protein uS19 family.</text>
</comment>
<proteinExistence type="inferred from homology"/>
<gene>
    <name evidence="1" type="primary">rpsS</name>
    <name type="ordered locus">SAR11_1113</name>
</gene>